<reference key="1">
    <citation type="journal article" date="2000" name="Science">
        <title>Complete genome sequence of Neisseria meningitidis serogroup B strain MC58.</title>
        <authorList>
            <person name="Tettelin H."/>
            <person name="Saunders N.J."/>
            <person name="Heidelberg J.F."/>
            <person name="Jeffries A.C."/>
            <person name="Nelson K.E."/>
            <person name="Eisen J.A."/>
            <person name="Ketchum K.A."/>
            <person name="Hood D.W."/>
            <person name="Peden J.F."/>
            <person name="Dodson R.J."/>
            <person name="Nelson W.C."/>
            <person name="Gwinn M.L."/>
            <person name="DeBoy R.T."/>
            <person name="Peterson J.D."/>
            <person name="Hickey E.K."/>
            <person name="Haft D.H."/>
            <person name="Salzberg S.L."/>
            <person name="White O."/>
            <person name="Fleischmann R.D."/>
            <person name="Dougherty B.A."/>
            <person name="Mason T.M."/>
            <person name="Ciecko A."/>
            <person name="Parksey D.S."/>
            <person name="Blair E."/>
            <person name="Cittone H."/>
            <person name="Clark E.B."/>
            <person name="Cotton M.D."/>
            <person name="Utterback T.R."/>
            <person name="Khouri H.M."/>
            <person name="Qin H."/>
            <person name="Vamathevan J.J."/>
            <person name="Gill J."/>
            <person name="Scarlato V."/>
            <person name="Masignani V."/>
            <person name="Pizza M."/>
            <person name="Grandi G."/>
            <person name="Sun L."/>
            <person name="Smith H.O."/>
            <person name="Fraser C.M."/>
            <person name="Moxon E.R."/>
            <person name="Rappuoli R."/>
            <person name="Venter J.C."/>
        </authorList>
    </citation>
    <scope>NUCLEOTIDE SEQUENCE [LARGE SCALE GENOMIC DNA]</scope>
    <source>
        <strain>ATCC BAA-335 / MC58</strain>
    </source>
</reference>
<proteinExistence type="inferred from homology"/>
<keyword id="KW-0997">Cell inner membrane</keyword>
<keyword id="KW-1003">Cell membrane</keyword>
<keyword id="KW-0133">Cell shape</keyword>
<keyword id="KW-0961">Cell wall biogenesis/degradation</keyword>
<keyword id="KW-0328">Glycosyltransferase</keyword>
<keyword id="KW-0472">Membrane</keyword>
<keyword id="KW-0573">Peptidoglycan synthesis</keyword>
<keyword id="KW-1185">Reference proteome</keyword>
<keyword id="KW-0808">Transferase</keyword>
<keyword id="KW-0812">Transmembrane</keyword>
<keyword id="KW-1133">Transmembrane helix</keyword>
<sequence length="233" mass="26603">MFRIIKWLIALPVGIFIFFNAYVYGNIITYRAVAPHRTAFMSMRMKQFEQEGRDVALDYRWMPYKRISTNLKKALIASEDARFAGHGGFDWGGIQNAIRRNRNSGKVKAGGSTISQQLAKNLFLNESRSYIRKGEEAAITAMMEAVTDKDRIFELYLNSIEWHYGVFGAEAASRYFYQIPAAKLTKQQAAKLTARVPAPLYYADHPKSKRLRNKTNIVLKRMGSAELPESDTD</sequence>
<accession>P0A0Z4</accession>
<accession>O52423</accession>
<accession>O52424</accession>
<accession>O52425</accession>
<accession>O52426</accession>
<accession>O52427</accession>
<accession>O52428</accession>
<accession>O52429</accession>
<accession>O52430</accession>
<accession>O52431</accession>
<accession>O52432</accession>
<accession>O54548</accession>
<accession>O54634</accession>
<accession>O54659</accession>
<comment type="function">
    <text evidence="1">Peptidoglycan polymerase that catalyzes glycan chain elongation from lipid-linked precursors.</text>
</comment>
<comment type="catalytic activity">
    <reaction evidence="1">
        <text>[GlcNAc-(1-&gt;4)-Mur2Ac(oyl-L-Ala-gamma-D-Glu-L-Lys-D-Ala-D-Ala)](n)-di-trans,octa-cis-undecaprenyl diphosphate + beta-D-GlcNAc-(1-&gt;4)-Mur2Ac(oyl-L-Ala-gamma-D-Glu-L-Lys-D-Ala-D-Ala)-di-trans,octa-cis-undecaprenyl diphosphate = [GlcNAc-(1-&gt;4)-Mur2Ac(oyl-L-Ala-gamma-D-Glu-L-Lys-D-Ala-D-Ala)](n+1)-di-trans,octa-cis-undecaprenyl diphosphate + di-trans,octa-cis-undecaprenyl diphosphate + H(+)</text>
        <dbReference type="Rhea" id="RHEA:23708"/>
        <dbReference type="Rhea" id="RHEA-COMP:9602"/>
        <dbReference type="Rhea" id="RHEA-COMP:9603"/>
        <dbReference type="ChEBI" id="CHEBI:15378"/>
        <dbReference type="ChEBI" id="CHEBI:58405"/>
        <dbReference type="ChEBI" id="CHEBI:60033"/>
        <dbReference type="ChEBI" id="CHEBI:78435"/>
        <dbReference type="EC" id="2.4.99.28"/>
    </reaction>
</comment>
<comment type="pathway">
    <text evidence="1">Cell wall biogenesis; peptidoglycan biosynthesis.</text>
</comment>
<comment type="subcellular location">
    <subcellularLocation>
        <location evidence="1">Cell inner membrane</location>
        <topology evidence="1">Single-pass membrane protein</topology>
    </subcellularLocation>
</comment>
<comment type="similarity">
    <text evidence="1">Belongs to the glycosyltransferase 51 family.</text>
</comment>
<evidence type="ECO:0000255" key="1">
    <source>
        <dbReference type="HAMAP-Rule" id="MF_00766"/>
    </source>
</evidence>
<name>MTGA_NEIMB</name>
<gene>
    <name evidence="1" type="primary">mtgA</name>
    <name type="synonym">mtg</name>
    <name type="ordered locus">NMB0357</name>
</gene>
<organism>
    <name type="scientific">Neisseria meningitidis serogroup B (strain ATCC BAA-335 / MC58)</name>
    <dbReference type="NCBI Taxonomy" id="122586"/>
    <lineage>
        <taxon>Bacteria</taxon>
        <taxon>Pseudomonadati</taxon>
        <taxon>Pseudomonadota</taxon>
        <taxon>Betaproteobacteria</taxon>
        <taxon>Neisseriales</taxon>
        <taxon>Neisseriaceae</taxon>
        <taxon>Neisseria</taxon>
    </lineage>
</organism>
<feature type="chain" id="PRO_0000083132" description="Biosynthetic peptidoglycan transglycosylase">
    <location>
        <begin position="1"/>
        <end position="233"/>
    </location>
</feature>
<feature type="transmembrane region" description="Helical" evidence="1">
    <location>
        <begin position="8"/>
        <end position="28"/>
    </location>
</feature>
<dbReference type="EC" id="2.4.99.28" evidence="1"/>
<dbReference type="EMBL" id="AE002098">
    <property type="protein sequence ID" value="AAF40800.1"/>
    <property type="molecule type" value="Genomic_DNA"/>
</dbReference>
<dbReference type="PIR" id="D81208">
    <property type="entry name" value="D81208"/>
</dbReference>
<dbReference type="RefSeq" id="NP_273406.1">
    <property type="nucleotide sequence ID" value="NC_003112.2"/>
</dbReference>
<dbReference type="RefSeq" id="WP_002224887.1">
    <property type="nucleotide sequence ID" value="NC_003112.2"/>
</dbReference>
<dbReference type="SMR" id="P0A0Z4"/>
<dbReference type="FunCoup" id="P0A0Z4">
    <property type="interactions" value="137"/>
</dbReference>
<dbReference type="STRING" id="122586.NMB0357"/>
<dbReference type="CAZy" id="GT51">
    <property type="family name" value="Glycosyltransferase Family 51"/>
</dbReference>
<dbReference type="PaxDb" id="122586-NMB0357"/>
<dbReference type="KEGG" id="nme:NMB0357"/>
<dbReference type="PATRIC" id="fig|122586.8.peg.451"/>
<dbReference type="HOGENOM" id="CLU_006354_1_0_4"/>
<dbReference type="InParanoid" id="P0A0Z4"/>
<dbReference type="OrthoDB" id="9766909at2"/>
<dbReference type="UniPathway" id="UPA00219"/>
<dbReference type="Proteomes" id="UP000000425">
    <property type="component" value="Chromosome"/>
</dbReference>
<dbReference type="GO" id="GO:0009274">
    <property type="term" value="C:peptidoglycan-based cell wall"/>
    <property type="evidence" value="ECO:0007669"/>
    <property type="project" value="InterPro"/>
</dbReference>
<dbReference type="GO" id="GO:0005886">
    <property type="term" value="C:plasma membrane"/>
    <property type="evidence" value="ECO:0000318"/>
    <property type="project" value="GO_Central"/>
</dbReference>
<dbReference type="GO" id="GO:0016763">
    <property type="term" value="F:pentosyltransferase activity"/>
    <property type="evidence" value="ECO:0007669"/>
    <property type="project" value="InterPro"/>
</dbReference>
<dbReference type="GO" id="GO:0008955">
    <property type="term" value="F:peptidoglycan glycosyltransferase activity"/>
    <property type="evidence" value="ECO:0000318"/>
    <property type="project" value="GO_Central"/>
</dbReference>
<dbReference type="GO" id="GO:0071555">
    <property type="term" value="P:cell wall organization"/>
    <property type="evidence" value="ECO:0007669"/>
    <property type="project" value="UniProtKB-KW"/>
</dbReference>
<dbReference type="GO" id="GO:0009252">
    <property type="term" value="P:peptidoglycan biosynthetic process"/>
    <property type="evidence" value="ECO:0000318"/>
    <property type="project" value="GO_Central"/>
</dbReference>
<dbReference type="GO" id="GO:0008360">
    <property type="term" value="P:regulation of cell shape"/>
    <property type="evidence" value="ECO:0007669"/>
    <property type="project" value="UniProtKB-KW"/>
</dbReference>
<dbReference type="Gene3D" id="1.10.3810.10">
    <property type="entry name" value="Biosynthetic peptidoglycan transglycosylase-like"/>
    <property type="match status" value="1"/>
</dbReference>
<dbReference type="HAMAP" id="MF_00766">
    <property type="entry name" value="PGT_MtgA"/>
    <property type="match status" value="1"/>
</dbReference>
<dbReference type="InterPro" id="IPR001264">
    <property type="entry name" value="Glyco_trans_51"/>
</dbReference>
<dbReference type="InterPro" id="IPR023346">
    <property type="entry name" value="Lysozyme-like_dom_sf"/>
</dbReference>
<dbReference type="InterPro" id="IPR036950">
    <property type="entry name" value="PBP_transglycosylase"/>
</dbReference>
<dbReference type="InterPro" id="IPR011812">
    <property type="entry name" value="Pep_trsgly"/>
</dbReference>
<dbReference type="NCBIfam" id="TIGR02070">
    <property type="entry name" value="mono_pep_trsgly"/>
    <property type="match status" value="1"/>
</dbReference>
<dbReference type="PANTHER" id="PTHR30400:SF0">
    <property type="entry name" value="BIOSYNTHETIC PEPTIDOGLYCAN TRANSGLYCOSYLASE"/>
    <property type="match status" value="1"/>
</dbReference>
<dbReference type="PANTHER" id="PTHR30400">
    <property type="entry name" value="MONOFUNCTIONAL BIOSYNTHETIC PEPTIDOGLYCAN TRANSGLYCOSYLASE"/>
    <property type="match status" value="1"/>
</dbReference>
<dbReference type="Pfam" id="PF00912">
    <property type="entry name" value="Transgly"/>
    <property type="match status" value="1"/>
</dbReference>
<dbReference type="SUPFAM" id="SSF53955">
    <property type="entry name" value="Lysozyme-like"/>
    <property type="match status" value="1"/>
</dbReference>
<protein>
    <recommendedName>
        <fullName evidence="1">Biosynthetic peptidoglycan transglycosylase</fullName>
        <ecNumber evidence="1">2.4.99.28</ecNumber>
    </recommendedName>
    <alternativeName>
        <fullName evidence="1">Glycan polymerase</fullName>
    </alternativeName>
    <alternativeName>
        <fullName evidence="1">Peptidoglycan glycosyltransferase MtgA</fullName>
        <shortName evidence="1">PGT</shortName>
    </alternativeName>
</protein>